<proteinExistence type="inferred from homology"/>
<gene>
    <name evidence="1" type="primary">ribB</name>
    <name type="ordered locus">SBO_2899</name>
</gene>
<keyword id="KW-0456">Lyase</keyword>
<keyword id="KW-0460">Magnesium</keyword>
<keyword id="KW-0464">Manganese</keyword>
<keyword id="KW-0479">Metal-binding</keyword>
<keyword id="KW-0686">Riboflavin biosynthesis</keyword>
<protein>
    <recommendedName>
        <fullName evidence="1">3,4-dihydroxy-2-butanone 4-phosphate synthase</fullName>
        <shortName evidence="1">DHBP synthase</shortName>
        <ecNumber evidence="1">4.1.99.12</ecNumber>
    </recommendedName>
</protein>
<comment type="function">
    <text evidence="1">Catalyzes the conversion of D-ribulose 5-phosphate to formate and 3,4-dihydroxy-2-butanone 4-phosphate.</text>
</comment>
<comment type="catalytic activity">
    <reaction evidence="1">
        <text>D-ribulose 5-phosphate = (2S)-2-hydroxy-3-oxobutyl phosphate + formate + H(+)</text>
        <dbReference type="Rhea" id="RHEA:18457"/>
        <dbReference type="ChEBI" id="CHEBI:15378"/>
        <dbReference type="ChEBI" id="CHEBI:15740"/>
        <dbReference type="ChEBI" id="CHEBI:58121"/>
        <dbReference type="ChEBI" id="CHEBI:58830"/>
        <dbReference type="EC" id="4.1.99.12"/>
    </reaction>
</comment>
<comment type="cofactor">
    <cofactor evidence="1">
        <name>Mg(2+)</name>
        <dbReference type="ChEBI" id="CHEBI:18420"/>
    </cofactor>
    <cofactor evidence="1">
        <name>Mn(2+)</name>
        <dbReference type="ChEBI" id="CHEBI:29035"/>
    </cofactor>
    <text evidence="1">Binds 2 divalent metal cations per subunit. Magnesium or manganese.</text>
</comment>
<comment type="pathway">
    <text evidence="1">Cofactor biosynthesis; riboflavin biosynthesis; 2-hydroxy-3-oxobutyl phosphate from D-ribulose 5-phosphate: step 1/1.</text>
</comment>
<comment type="subunit">
    <text evidence="1">Homodimer.</text>
</comment>
<comment type="similarity">
    <text evidence="1">Belongs to the DHBP synthase family.</text>
</comment>
<sequence>MNQTLLSSFGTPFERVENALAALREGRGVMVLDDEDRENEGDMIFPAETMTVEQMALTIRHGSGIVCLCITEDRRKQLDLPMMVENNTSAYGTGFTVTIEAAEGVTTGVSAADRITTVRAAIADGAKPSDLNRPGHVFPLRAQAGGVLTRGGHTEATIDLMTLAGFKPAGVLCELTNDDGTMARAPECIEFANKHNMALVTIEDLVAYRQAHERKAS</sequence>
<dbReference type="EC" id="4.1.99.12" evidence="1"/>
<dbReference type="EMBL" id="CP000036">
    <property type="protein sequence ID" value="ABB67417.1"/>
    <property type="molecule type" value="Genomic_DNA"/>
</dbReference>
<dbReference type="RefSeq" id="WP_001076997.1">
    <property type="nucleotide sequence ID" value="NC_007613.1"/>
</dbReference>
<dbReference type="SMR" id="Q31WZ1"/>
<dbReference type="GeneID" id="93778953"/>
<dbReference type="KEGG" id="sbo:SBO_2899"/>
<dbReference type="HOGENOM" id="CLU_020273_3_0_6"/>
<dbReference type="UniPathway" id="UPA00275">
    <property type="reaction ID" value="UER00399"/>
</dbReference>
<dbReference type="Proteomes" id="UP000007067">
    <property type="component" value="Chromosome"/>
</dbReference>
<dbReference type="GO" id="GO:0005829">
    <property type="term" value="C:cytosol"/>
    <property type="evidence" value="ECO:0007669"/>
    <property type="project" value="TreeGrafter"/>
</dbReference>
<dbReference type="GO" id="GO:0008686">
    <property type="term" value="F:3,4-dihydroxy-2-butanone-4-phosphate synthase activity"/>
    <property type="evidence" value="ECO:0007669"/>
    <property type="project" value="UniProtKB-UniRule"/>
</dbReference>
<dbReference type="GO" id="GO:0000287">
    <property type="term" value="F:magnesium ion binding"/>
    <property type="evidence" value="ECO:0007669"/>
    <property type="project" value="UniProtKB-UniRule"/>
</dbReference>
<dbReference type="GO" id="GO:0030145">
    <property type="term" value="F:manganese ion binding"/>
    <property type="evidence" value="ECO:0007669"/>
    <property type="project" value="UniProtKB-UniRule"/>
</dbReference>
<dbReference type="GO" id="GO:0009231">
    <property type="term" value="P:riboflavin biosynthetic process"/>
    <property type="evidence" value="ECO:0007669"/>
    <property type="project" value="UniProtKB-UniRule"/>
</dbReference>
<dbReference type="FunFam" id="3.90.870.10:FF:000002">
    <property type="entry name" value="3,4-dihydroxy-2-butanone 4-phosphate synthase"/>
    <property type="match status" value="1"/>
</dbReference>
<dbReference type="Gene3D" id="3.90.870.10">
    <property type="entry name" value="DHBP synthase"/>
    <property type="match status" value="1"/>
</dbReference>
<dbReference type="HAMAP" id="MF_00180">
    <property type="entry name" value="RibB"/>
    <property type="match status" value="1"/>
</dbReference>
<dbReference type="InterPro" id="IPR017945">
    <property type="entry name" value="DHBP_synth_RibB-like_a/b_dom"/>
</dbReference>
<dbReference type="InterPro" id="IPR000422">
    <property type="entry name" value="DHBP_synthase_RibB"/>
</dbReference>
<dbReference type="NCBIfam" id="TIGR00506">
    <property type="entry name" value="ribB"/>
    <property type="match status" value="1"/>
</dbReference>
<dbReference type="PANTHER" id="PTHR21327:SF38">
    <property type="entry name" value="3,4-DIHYDROXY-2-BUTANONE 4-PHOSPHATE SYNTHASE"/>
    <property type="match status" value="1"/>
</dbReference>
<dbReference type="PANTHER" id="PTHR21327">
    <property type="entry name" value="GTP CYCLOHYDROLASE II-RELATED"/>
    <property type="match status" value="1"/>
</dbReference>
<dbReference type="Pfam" id="PF00926">
    <property type="entry name" value="DHBP_synthase"/>
    <property type="match status" value="1"/>
</dbReference>
<dbReference type="SUPFAM" id="SSF55821">
    <property type="entry name" value="YrdC/RibB"/>
    <property type="match status" value="1"/>
</dbReference>
<evidence type="ECO:0000255" key="1">
    <source>
        <dbReference type="HAMAP-Rule" id="MF_00180"/>
    </source>
</evidence>
<name>RIBB_SHIBS</name>
<accession>Q31WZ1</accession>
<organism>
    <name type="scientific">Shigella boydii serotype 4 (strain Sb227)</name>
    <dbReference type="NCBI Taxonomy" id="300268"/>
    <lineage>
        <taxon>Bacteria</taxon>
        <taxon>Pseudomonadati</taxon>
        <taxon>Pseudomonadota</taxon>
        <taxon>Gammaproteobacteria</taxon>
        <taxon>Enterobacterales</taxon>
        <taxon>Enterobacteriaceae</taxon>
        <taxon>Shigella</taxon>
    </lineage>
</organism>
<feature type="chain" id="PRO_1000040634" description="3,4-dihydroxy-2-butanone 4-phosphate synthase">
    <location>
        <begin position="1"/>
        <end position="217"/>
    </location>
</feature>
<feature type="binding site" evidence="1">
    <location>
        <begin position="37"/>
        <end position="38"/>
    </location>
    <ligand>
        <name>D-ribulose 5-phosphate</name>
        <dbReference type="ChEBI" id="CHEBI:58121"/>
    </ligand>
</feature>
<feature type="binding site" evidence="1">
    <location>
        <position position="38"/>
    </location>
    <ligand>
        <name>Mg(2+)</name>
        <dbReference type="ChEBI" id="CHEBI:18420"/>
        <label>1</label>
    </ligand>
</feature>
<feature type="binding site" evidence="1">
    <location>
        <position position="38"/>
    </location>
    <ligand>
        <name>Mg(2+)</name>
        <dbReference type="ChEBI" id="CHEBI:18420"/>
        <label>2</label>
    </ligand>
</feature>
<feature type="binding site" evidence="1">
    <location>
        <position position="42"/>
    </location>
    <ligand>
        <name>D-ribulose 5-phosphate</name>
        <dbReference type="ChEBI" id="CHEBI:58121"/>
    </ligand>
</feature>
<feature type="binding site" evidence="1">
    <location>
        <begin position="150"/>
        <end position="154"/>
    </location>
    <ligand>
        <name>D-ribulose 5-phosphate</name>
        <dbReference type="ChEBI" id="CHEBI:58121"/>
    </ligand>
</feature>
<feature type="binding site" evidence="1">
    <location>
        <position position="153"/>
    </location>
    <ligand>
        <name>Mg(2+)</name>
        <dbReference type="ChEBI" id="CHEBI:18420"/>
        <label>2</label>
    </ligand>
</feature>
<feature type="binding site" evidence="1">
    <location>
        <position position="174"/>
    </location>
    <ligand>
        <name>D-ribulose 5-phosphate</name>
        <dbReference type="ChEBI" id="CHEBI:58121"/>
    </ligand>
</feature>
<feature type="site" description="Essential for catalytic activity" evidence="1">
    <location>
        <position position="136"/>
    </location>
</feature>
<feature type="site" description="Essential for catalytic activity" evidence="1">
    <location>
        <position position="174"/>
    </location>
</feature>
<reference key="1">
    <citation type="journal article" date="2005" name="Nucleic Acids Res.">
        <title>Genome dynamics and diversity of Shigella species, the etiologic agents of bacillary dysentery.</title>
        <authorList>
            <person name="Yang F."/>
            <person name="Yang J."/>
            <person name="Zhang X."/>
            <person name="Chen L."/>
            <person name="Jiang Y."/>
            <person name="Yan Y."/>
            <person name="Tang X."/>
            <person name="Wang J."/>
            <person name="Xiong Z."/>
            <person name="Dong J."/>
            <person name="Xue Y."/>
            <person name="Zhu Y."/>
            <person name="Xu X."/>
            <person name="Sun L."/>
            <person name="Chen S."/>
            <person name="Nie H."/>
            <person name="Peng J."/>
            <person name="Xu J."/>
            <person name="Wang Y."/>
            <person name="Yuan Z."/>
            <person name="Wen Y."/>
            <person name="Yao Z."/>
            <person name="Shen Y."/>
            <person name="Qiang B."/>
            <person name="Hou Y."/>
            <person name="Yu J."/>
            <person name="Jin Q."/>
        </authorList>
    </citation>
    <scope>NUCLEOTIDE SEQUENCE [LARGE SCALE GENOMIC DNA]</scope>
    <source>
        <strain>Sb227</strain>
    </source>
</reference>